<organism>
    <name type="scientific">Shigella flexneri</name>
    <dbReference type="NCBI Taxonomy" id="623"/>
    <lineage>
        <taxon>Bacteria</taxon>
        <taxon>Pseudomonadati</taxon>
        <taxon>Pseudomonadota</taxon>
        <taxon>Gammaproteobacteria</taxon>
        <taxon>Enterobacterales</taxon>
        <taxon>Enterobacteriaceae</taxon>
        <taxon>Shigella</taxon>
    </lineage>
</organism>
<gene>
    <name type="primary">cdsA</name>
    <name type="ordered locus">SF0165</name>
    <name type="ordered locus">S0168</name>
</gene>
<accession>P0ABG3</accession>
<accession>P06466</accession>
<proteinExistence type="inferred from homology"/>
<protein>
    <recommendedName>
        <fullName>Phosphatidate cytidylyltransferase</fullName>
        <ecNumber>2.7.7.41</ecNumber>
    </recommendedName>
    <alternativeName>
        <fullName>CDP-DAG synthase</fullName>
    </alternativeName>
    <alternativeName>
        <fullName>CDP-DG synthase</fullName>
    </alternativeName>
    <alternativeName>
        <fullName>CDP-diacylglycerol synthase</fullName>
        <shortName>CDS</shortName>
    </alternativeName>
    <alternativeName>
        <fullName>CDP-diglyceride pyrophosphorylase</fullName>
    </alternativeName>
    <alternativeName>
        <fullName>CDP-diglyceride synthase</fullName>
    </alternativeName>
    <alternativeName>
        <fullName>CTP:phosphatidate cytidylyltransferase</fullName>
    </alternativeName>
</protein>
<sequence>MLKYRLISAFVLIPVVIAALFLLPPVGFAIVTLVVCMLAAWEWGQLSGFTTRSQRVWLAVLCGLLLALMLFLLPEYHRNIHQPLVEISLWASLGWWIVALLLVLFYPGSAAIWRNSKTLRLIFGVLTIVPFFWGMLALRAWHYDENHYSGAIWLLYVMILVWGADSGAYMFGKLFGKHKLAPKVSPGKTWQGFIGGLATAAVISWGYGMWANLDVAPVTLLICSIVAALASVLGDLTESMFKREAGIKDSGHLIPGHGGILDRIDSLTAAVPVFACLLLLVFRTL</sequence>
<keyword id="KW-0997">Cell inner membrane</keyword>
<keyword id="KW-1003">Cell membrane</keyword>
<keyword id="KW-0444">Lipid biosynthesis</keyword>
<keyword id="KW-0443">Lipid metabolism</keyword>
<keyword id="KW-0472">Membrane</keyword>
<keyword id="KW-0548">Nucleotidyltransferase</keyword>
<keyword id="KW-0594">Phospholipid biosynthesis</keyword>
<keyword id="KW-1208">Phospholipid metabolism</keyword>
<keyword id="KW-1185">Reference proteome</keyword>
<keyword id="KW-0808">Transferase</keyword>
<keyword id="KW-0812">Transmembrane</keyword>
<keyword id="KW-1133">Transmembrane helix</keyword>
<dbReference type="EC" id="2.7.7.41"/>
<dbReference type="EMBL" id="AE005674">
    <property type="protein sequence ID" value="AAN41827.2"/>
    <property type="status" value="ALT_INIT"/>
    <property type="molecule type" value="Genomic_DNA"/>
</dbReference>
<dbReference type="EMBL" id="AE014073">
    <property type="protein sequence ID" value="AAP15708.1"/>
    <property type="status" value="ALT_INIT"/>
    <property type="molecule type" value="Genomic_DNA"/>
</dbReference>
<dbReference type="RefSeq" id="NP_706120.4">
    <property type="nucleotide sequence ID" value="NC_004337.2"/>
</dbReference>
<dbReference type="RefSeq" id="WP_000922446.1">
    <property type="nucleotide sequence ID" value="NZ_WPGW01000006.1"/>
</dbReference>
<dbReference type="SMR" id="P0ABG3"/>
<dbReference type="STRING" id="198214.SF0165"/>
<dbReference type="PaxDb" id="198214-SF0165"/>
<dbReference type="GeneID" id="1024478"/>
<dbReference type="GeneID" id="93777250"/>
<dbReference type="KEGG" id="sfl:SF0165"/>
<dbReference type="KEGG" id="sfx:S0168"/>
<dbReference type="PATRIC" id="fig|198214.7.peg.187"/>
<dbReference type="HOGENOM" id="CLU_037294_1_2_6"/>
<dbReference type="UniPathway" id="UPA00557">
    <property type="reaction ID" value="UER00614"/>
</dbReference>
<dbReference type="Proteomes" id="UP000001006">
    <property type="component" value="Chromosome"/>
</dbReference>
<dbReference type="Proteomes" id="UP000002673">
    <property type="component" value="Chromosome"/>
</dbReference>
<dbReference type="GO" id="GO:0005886">
    <property type="term" value="C:plasma membrane"/>
    <property type="evidence" value="ECO:0007669"/>
    <property type="project" value="UniProtKB-SubCell"/>
</dbReference>
<dbReference type="GO" id="GO:0004605">
    <property type="term" value="F:phosphatidate cytidylyltransferase activity"/>
    <property type="evidence" value="ECO:0007669"/>
    <property type="project" value="UniProtKB-EC"/>
</dbReference>
<dbReference type="GO" id="GO:0016024">
    <property type="term" value="P:CDP-diacylglycerol biosynthetic process"/>
    <property type="evidence" value="ECO:0007669"/>
    <property type="project" value="UniProtKB-UniPathway"/>
</dbReference>
<dbReference type="InterPro" id="IPR000374">
    <property type="entry name" value="PC_trans"/>
</dbReference>
<dbReference type="NCBIfam" id="NF008635">
    <property type="entry name" value="PRK11624.1"/>
    <property type="match status" value="1"/>
</dbReference>
<dbReference type="PANTHER" id="PTHR46382">
    <property type="entry name" value="PHOSPHATIDATE CYTIDYLYLTRANSFERASE"/>
    <property type="match status" value="1"/>
</dbReference>
<dbReference type="PANTHER" id="PTHR46382:SF1">
    <property type="entry name" value="PHOSPHATIDATE CYTIDYLYLTRANSFERASE"/>
    <property type="match status" value="1"/>
</dbReference>
<dbReference type="Pfam" id="PF01148">
    <property type="entry name" value="CTP_transf_1"/>
    <property type="match status" value="1"/>
</dbReference>
<dbReference type="PROSITE" id="PS01315">
    <property type="entry name" value="CDS"/>
    <property type="match status" value="1"/>
</dbReference>
<feature type="chain" id="PRO_0000090746" description="Phosphatidate cytidylyltransferase">
    <location>
        <begin position="1"/>
        <end position="285"/>
    </location>
</feature>
<feature type="transmembrane region" description="Helical" evidence="2">
    <location>
        <begin position="10"/>
        <end position="30"/>
    </location>
</feature>
<feature type="transmembrane region" description="Helical" evidence="2">
    <location>
        <begin position="56"/>
        <end position="76"/>
    </location>
</feature>
<feature type="transmembrane region" description="Helical" evidence="2">
    <location>
        <begin position="93"/>
        <end position="113"/>
    </location>
</feature>
<feature type="transmembrane region" description="Helical" evidence="2">
    <location>
        <begin position="121"/>
        <end position="141"/>
    </location>
</feature>
<feature type="transmembrane region" description="Helical" evidence="2">
    <location>
        <begin position="151"/>
        <end position="171"/>
    </location>
</feature>
<feature type="transmembrane region" description="Helical" evidence="2">
    <location>
        <begin position="190"/>
        <end position="210"/>
    </location>
</feature>
<feature type="transmembrane region" description="Helical" evidence="2">
    <location>
        <begin position="213"/>
        <end position="233"/>
    </location>
</feature>
<feature type="transmembrane region" description="Helical" evidence="2">
    <location>
        <begin position="264"/>
        <end position="284"/>
    </location>
</feature>
<reference key="1">
    <citation type="journal article" date="2002" name="Nucleic Acids Res.">
        <title>Genome sequence of Shigella flexneri 2a: insights into pathogenicity through comparison with genomes of Escherichia coli K12 and O157.</title>
        <authorList>
            <person name="Jin Q."/>
            <person name="Yuan Z."/>
            <person name="Xu J."/>
            <person name="Wang Y."/>
            <person name="Shen Y."/>
            <person name="Lu W."/>
            <person name="Wang J."/>
            <person name="Liu H."/>
            <person name="Yang J."/>
            <person name="Yang F."/>
            <person name="Zhang X."/>
            <person name="Zhang J."/>
            <person name="Yang G."/>
            <person name="Wu H."/>
            <person name="Qu D."/>
            <person name="Dong J."/>
            <person name="Sun L."/>
            <person name="Xue Y."/>
            <person name="Zhao A."/>
            <person name="Gao Y."/>
            <person name="Zhu J."/>
            <person name="Kan B."/>
            <person name="Ding K."/>
            <person name="Chen S."/>
            <person name="Cheng H."/>
            <person name="Yao Z."/>
            <person name="He B."/>
            <person name="Chen R."/>
            <person name="Ma D."/>
            <person name="Qiang B."/>
            <person name="Wen Y."/>
            <person name="Hou Y."/>
            <person name="Yu J."/>
        </authorList>
    </citation>
    <scope>NUCLEOTIDE SEQUENCE [LARGE SCALE GENOMIC DNA]</scope>
    <source>
        <strain>301 / Serotype 2a</strain>
    </source>
</reference>
<reference key="2">
    <citation type="journal article" date="2003" name="Infect. Immun.">
        <title>Complete genome sequence and comparative genomics of Shigella flexneri serotype 2a strain 2457T.</title>
        <authorList>
            <person name="Wei J."/>
            <person name="Goldberg M.B."/>
            <person name="Burland V."/>
            <person name="Venkatesan M.M."/>
            <person name="Deng W."/>
            <person name="Fournier G."/>
            <person name="Mayhew G.F."/>
            <person name="Plunkett G. III"/>
            <person name="Rose D.J."/>
            <person name="Darling A."/>
            <person name="Mau B."/>
            <person name="Perna N.T."/>
            <person name="Payne S.M."/>
            <person name="Runyen-Janecky L.J."/>
            <person name="Zhou S."/>
            <person name="Schwartz D.C."/>
            <person name="Blattner F.R."/>
        </authorList>
    </citation>
    <scope>NUCLEOTIDE SEQUENCE [LARGE SCALE GENOMIC DNA]</scope>
    <source>
        <strain>ATCC 700930 / 2457T / Serotype 2a</strain>
    </source>
</reference>
<evidence type="ECO:0000250" key="1"/>
<evidence type="ECO:0000255" key="2"/>
<evidence type="ECO:0000305" key="3"/>
<comment type="catalytic activity">
    <reaction>
        <text>a 1,2-diacyl-sn-glycero-3-phosphate + CTP + H(+) = a CDP-1,2-diacyl-sn-glycerol + diphosphate</text>
        <dbReference type="Rhea" id="RHEA:16229"/>
        <dbReference type="ChEBI" id="CHEBI:15378"/>
        <dbReference type="ChEBI" id="CHEBI:33019"/>
        <dbReference type="ChEBI" id="CHEBI:37563"/>
        <dbReference type="ChEBI" id="CHEBI:58332"/>
        <dbReference type="ChEBI" id="CHEBI:58608"/>
        <dbReference type="EC" id="2.7.7.41"/>
    </reaction>
</comment>
<comment type="pathway">
    <text>Phospholipid metabolism; CDP-diacylglycerol biosynthesis; CDP-diacylglycerol from sn-glycerol 3-phosphate: step 3/3.</text>
</comment>
<comment type="subcellular location">
    <subcellularLocation>
        <location evidence="1">Cell inner membrane</location>
        <topology evidence="1">Multi-pass membrane protein</topology>
    </subcellularLocation>
</comment>
<comment type="similarity">
    <text evidence="3">Belongs to the CDS family.</text>
</comment>
<comment type="sequence caution" evidence="3">
    <conflict type="erroneous initiation">
        <sequence resource="EMBL-CDS" id="AAN41827"/>
    </conflict>
    <text>Truncated N-terminus.</text>
</comment>
<comment type="sequence caution" evidence="3">
    <conflict type="erroneous initiation">
        <sequence resource="EMBL-CDS" id="AAP15708"/>
    </conflict>
    <text>Truncated N-terminus.</text>
</comment>
<name>CDSA_SHIFL</name>